<organism>
    <name type="scientific">Bordetella pertussis (strain Tohama I / ATCC BAA-589 / NCTC 13251)</name>
    <dbReference type="NCBI Taxonomy" id="257313"/>
    <lineage>
        <taxon>Bacteria</taxon>
        <taxon>Pseudomonadati</taxon>
        <taxon>Pseudomonadota</taxon>
        <taxon>Betaproteobacteria</taxon>
        <taxon>Burkholderiales</taxon>
        <taxon>Alcaligenaceae</taxon>
        <taxon>Bordetella</taxon>
    </lineage>
</organism>
<protein>
    <recommendedName>
        <fullName evidence="1">Small ribosomal subunit protein uS8</fullName>
    </recommendedName>
    <alternativeName>
        <fullName evidence="2">30S ribosomal protein S8</fullName>
    </alternativeName>
</protein>
<comment type="function">
    <text evidence="1">One of the primary rRNA binding proteins, it binds directly to 16S rRNA central domain where it helps coordinate assembly of the platform of the 30S subunit.</text>
</comment>
<comment type="subunit">
    <text evidence="1">Part of the 30S ribosomal subunit. Contacts proteins S5 and S12.</text>
</comment>
<comment type="similarity">
    <text evidence="1">Belongs to the universal ribosomal protein uS8 family.</text>
</comment>
<proteinExistence type="inferred from homology"/>
<gene>
    <name evidence="1" type="primary">rpsH</name>
    <name type="ordered locus">BP3630</name>
</gene>
<reference key="1">
    <citation type="journal article" date="2003" name="Nat. Genet.">
        <title>Comparative analysis of the genome sequences of Bordetella pertussis, Bordetella parapertussis and Bordetella bronchiseptica.</title>
        <authorList>
            <person name="Parkhill J."/>
            <person name="Sebaihia M."/>
            <person name="Preston A."/>
            <person name="Murphy L.D."/>
            <person name="Thomson N.R."/>
            <person name="Harris D.E."/>
            <person name="Holden M.T.G."/>
            <person name="Churcher C.M."/>
            <person name="Bentley S.D."/>
            <person name="Mungall K.L."/>
            <person name="Cerdeno-Tarraga A.-M."/>
            <person name="Temple L."/>
            <person name="James K.D."/>
            <person name="Harris B."/>
            <person name="Quail M.A."/>
            <person name="Achtman M."/>
            <person name="Atkin R."/>
            <person name="Baker S."/>
            <person name="Basham D."/>
            <person name="Bason N."/>
            <person name="Cherevach I."/>
            <person name="Chillingworth T."/>
            <person name="Collins M."/>
            <person name="Cronin A."/>
            <person name="Davis P."/>
            <person name="Doggett J."/>
            <person name="Feltwell T."/>
            <person name="Goble A."/>
            <person name="Hamlin N."/>
            <person name="Hauser H."/>
            <person name="Holroyd S."/>
            <person name="Jagels K."/>
            <person name="Leather S."/>
            <person name="Moule S."/>
            <person name="Norberczak H."/>
            <person name="O'Neil S."/>
            <person name="Ormond D."/>
            <person name="Price C."/>
            <person name="Rabbinowitsch E."/>
            <person name="Rutter S."/>
            <person name="Sanders M."/>
            <person name="Saunders D."/>
            <person name="Seeger K."/>
            <person name="Sharp S."/>
            <person name="Simmonds M."/>
            <person name="Skelton J."/>
            <person name="Squares R."/>
            <person name="Squares S."/>
            <person name="Stevens K."/>
            <person name="Unwin L."/>
            <person name="Whitehead S."/>
            <person name="Barrell B.G."/>
            <person name="Maskell D.J."/>
        </authorList>
    </citation>
    <scope>NUCLEOTIDE SEQUENCE [LARGE SCALE GENOMIC DNA]</scope>
    <source>
        <strain>Tohama I / ATCC BAA-589 / NCTC 13251</strain>
    </source>
</reference>
<accession>Q7VTB7</accession>
<sequence>MSMSDPIADMLTRIRNAQQVDKTTVTMPASKLKVAIATVLKDEGYIDGYSVKGTQAKPELEITLKYYAGRPVIERIERVSRPGLRIYKGRTSIPQVMNGLGVAIVSTSRGVMTDRKARANGVGGEVLCYVA</sequence>
<keyword id="KW-1185">Reference proteome</keyword>
<keyword id="KW-0687">Ribonucleoprotein</keyword>
<keyword id="KW-0689">Ribosomal protein</keyword>
<keyword id="KW-0694">RNA-binding</keyword>
<keyword id="KW-0699">rRNA-binding</keyword>
<name>RS8_BORPE</name>
<feature type="chain" id="PRO_0000126376" description="Small ribosomal subunit protein uS8">
    <location>
        <begin position="1"/>
        <end position="131"/>
    </location>
</feature>
<dbReference type="EMBL" id="BX640422">
    <property type="protein sequence ID" value="CAE43887.1"/>
    <property type="molecule type" value="Genomic_DNA"/>
</dbReference>
<dbReference type="RefSeq" id="NP_882139.1">
    <property type="nucleotide sequence ID" value="NC_002929.2"/>
</dbReference>
<dbReference type="RefSeq" id="WP_003806920.1">
    <property type="nucleotide sequence ID" value="NZ_CP039022.1"/>
</dbReference>
<dbReference type="SMR" id="Q7VTB7"/>
<dbReference type="STRING" id="257313.BP3630"/>
<dbReference type="PaxDb" id="257313-BP3630"/>
<dbReference type="GeneID" id="93206275"/>
<dbReference type="KEGG" id="bpe:BP3630"/>
<dbReference type="PATRIC" id="fig|257313.5.peg.3927"/>
<dbReference type="eggNOG" id="COG0096">
    <property type="taxonomic scope" value="Bacteria"/>
</dbReference>
<dbReference type="HOGENOM" id="CLU_098428_0_0_4"/>
<dbReference type="Proteomes" id="UP000002676">
    <property type="component" value="Chromosome"/>
</dbReference>
<dbReference type="GO" id="GO:1990904">
    <property type="term" value="C:ribonucleoprotein complex"/>
    <property type="evidence" value="ECO:0007669"/>
    <property type="project" value="UniProtKB-KW"/>
</dbReference>
<dbReference type="GO" id="GO:0005840">
    <property type="term" value="C:ribosome"/>
    <property type="evidence" value="ECO:0007669"/>
    <property type="project" value="UniProtKB-KW"/>
</dbReference>
<dbReference type="GO" id="GO:0019843">
    <property type="term" value="F:rRNA binding"/>
    <property type="evidence" value="ECO:0007669"/>
    <property type="project" value="UniProtKB-UniRule"/>
</dbReference>
<dbReference type="GO" id="GO:0003735">
    <property type="term" value="F:structural constituent of ribosome"/>
    <property type="evidence" value="ECO:0007669"/>
    <property type="project" value="InterPro"/>
</dbReference>
<dbReference type="GO" id="GO:0006412">
    <property type="term" value="P:translation"/>
    <property type="evidence" value="ECO:0007669"/>
    <property type="project" value="UniProtKB-UniRule"/>
</dbReference>
<dbReference type="FunFam" id="3.30.1370.30:FF:000003">
    <property type="entry name" value="30S ribosomal protein S8"/>
    <property type="match status" value="1"/>
</dbReference>
<dbReference type="FunFam" id="3.30.1490.10:FF:000001">
    <property type="entry name" value="30S ribosomal protein S8"/>
    <property type="match status" value="1"/>
</dbReference>
<dbReference type="Gene3D" id="3.30.1370.30">
    <property type="match status" value="1"/>
</dbReference>
<dbReference type="Gene3D" id="3.30.1490.10">
    <property type="match status" value="1"/>
</dbReference>
<dbReference type="HAMAP" id="MF_01302_B">
    <property type="entry name" value="Ribosomal_uS8_B"/>
    <property type="match status" value="1"/>
</dbReference>
<dbReference type="InterPro" id="IPR000630">
    <property type="entry name" value="Ribosomal_uS8"/>
</dbReference>
<dbReference type="InterPro" id="IPR047863">
    <property type="entry name" value="Ribosomal_uS8_CS"/>
</dbReference>
<dbReference type="InterPro" id="IPR035987">
    <property type="entry name" value="Ribosomal_uS8_sf"/>
</dbReference>
<dbReference type="NCBIfam" id="NF001109">
    <property type="entry name" value="PRK00136.1"/>
    <property type="match status" value="1"/>
</dbReference>
<dbReference type="PANTHER" id="PTHR11758">
    <property type="entry name" value="40S RIBOSOMAL PROTEIN S15A"/>
    <property type="match status" value="1"/>
</dbReference>
<dbReference type="Pfam" id="PF00410">
    <property type="entry name" value="Ribosomal_S8"/>
    <property type="match status" value="1"/>
</dbReference>
<dbReference type="SUPFAM" id="SSF56047">
    <property type="entry name" value="Ribosomal protein S8"/>
    <property type="match status" value="1"/>
</dbReference>
<dbReference type="PROSITE" id="PS00053">
    <property type="entry name" value="RIBOSOMAL_S8"/>
    <property type="match status" value="1"/>
</dbReference>
<evidence type="ECO:0000255" key="1">
    <source>
        <dbReference type="HAMAP-Rule" id="MF_01302"/>
    </source>
</evidence>
<evidence type="ECO:0000305" key="2"/>